<proteinExistence type="inferred from homology"/>
<accession>Q5HNU6</accession>
<keyword id="KW-0067">ATP-binding</keyword>
<keyword id="KW-0378">Hydrolase</keyword>
<keyword id="KW-0547">Nucleotide-binding</keyword>
<keyword id="KW-1185">Reference proteome</keyword>
<sequence>MKLKIDLNCDLGEAFGNYTFGGDQHILPLITSANIACGYHAGDEDVMNETVQLAKKNNISIGAHPGLPDLKGFGRRKMDLTPNEIYNLVIYQLGALSGFCKINHVKMMHVKPHGALYQMGARNKEIAHAIAQAVFDFDSNLIFVGLANTLLISEAELVGLKVASEVFADRRYEDDGQLVSRKKTDATITNTDEAIQQALKMVLENKVVSKNGKIIDLKADTICVHGDGKHALEFVTQIRNELMKEGIDIQSL</sequence>
<dbReference type="EC" id="3.5.2.9" evidence="1"/>
<dbReference type="EMBL" id="CP000029">
    <property type="protein sequence ID" value="AAW54525.1"/>
    <property type="molecule type" value="Genomic_DNA"/>
</dbReference>
<dbReference type="SMR" id="Q5HNU6"/>
<dbReference type="STRING" id="176279.SERP1168"/>
<dbReference type="KEGG" id="ser:SERP1168"/>
<dbReference type="eggNOG" id="COG1540">
    <property type="taxonomic scope" value="Bacteria"/>
</dbReference>
<dbReference type="HOGENOM" id="CLU_069535_0_0_9"/>
<dbReference type="Proteomes" id="UP000000531">
    <property type="component" value="Chromosome"/>
</dbReference>
<dbReference type="GO" id="GO:0017168">
    <property type="term" value="F:5-oxoprolinase (ATP-hydrolyzing) activity"/>
    <property type="evidence" value="ECO:0007669"/>
    <property type="project" value="UniProtKB-UniRule"/>
</dbReference>
<dbReference type="GO" id="GO:0005524">
    <property type="term" value="F:ATP binding"/>
    <property type="evidence" value="ECO:0007669"/>
    <property type="project" value="UniProtKB-UniRule"/>
</dbReference>
<dbReference type="GO" id="GO:0005975">
    <property type="term" value="P:carbohydrate metabolic process"/>
    <property type="evidence" value="ECO:0007669"/>
    <property type="project" value="InterPro"/>
</dbReference>
<dbReference type="CDD" id="cd10787">
    <property type="entry name" value="LamB_YcsF_like"/>
    <property type="match status" value="1"/>
</dbReference>
<dbReference type="Gene3D" id="3.20.20.370">
    <property type="entry name" value="Glycoside hydrolase/deacetylase"/>
    <property type="match status" value="1"/>
</dbReference>
<dbReference type="HAMAP" id="MF_00691">
    <property type="entry name" value="PxpA"/>
    <property type="match status" value="1"/>
</dbReference>
<dbReference type="InterPro" id="IPR011330">
    <property type="entry name" value="Glyco_hydro/deAcase_b/a-brl"/>
</dbReference>
<dbReference type="InterPro" id="IPR005501">
    <property type="entry name" value="LamB/YcsF/PxpA-like"/>
</dbReference>
<dbReference type="NCBIfam" id="NF003813">
    <property type="entry name" value="PRK05406.1-2"/>
    <property type="match status" value="1"/>
</dbReference>
<dbReference type="NCBIfam" id="NF003814">
    <property type="entry name" value="PRK05406.1-3"/>
    <property type="match status" value="1"/>
</dbReference>
<dbReference type="NCBIfam" id="NF003816">
    <property type="entry name" value="PRK05406.1-5"/>
    <property type="match status" value="1"/>
</dbReference>
<dbReference type="PANTHER" id="PTHR30292:SF0">
    <property type="entry name" value="5-OXOPROLINASE SUBUNIT A"/>
    <property type="match status" value="1"/>
</dbReference>
<dbReference type="PANTHER" id="PTHR30292">
    <property type="entry name" value="UNCHARACTERIZED PROTEIN YBGL-RELATED"/>
    <property type="match status" value="1"/>
</dbReference>
<dbReference type="Pfam" id="PF03746">
    <property type="entry name" value="LamB_YcsF"/>
    <property type="match status" value="1"/>
</dbReference>
<dbReference type="SUPFAM" id="SSF88713">
    <property type="entry name" value="Glycoside hydrolase/deacetylase"/>
    <property type="match status" value="1"/>
</dbReference>
<feature type="chain" id="PRO_0000185050" description="5-oxoprolinase subunit A">
    <location>
        <begin position="1"/>
        <end position="252"/>
    </location>
</feature>
<organism>
    <name type="scientific">Staphylococcus epidermidis (strain ATCC 35984 / DSM 28319 / BCRC 17069 / CCUG 31568 / BM 3577 / RP62A)</name>
    <dbReference type="NCBI Taxonomy" id="176279"/>
    <lineage>
        <taxon>Bacteria</taxon>
        <taxon>Bacillati</taxon>
        <taxon>Bacillota</taxon>
        <taxon>Bacilli</taxon>
        <taxon>Bacillales</taxon>
        <taxon>Staphylococcaceae</taxon>
        <taxon>Staphylococcus</taxon>
    </lineage>
</organism>
<comment type="function">
    <text evidence="1">Catalyzes the cleavage of 5-oxoproline to form L-glutamate coupled to the hydrolysis of ATP to ADP and inorganic phosphate.</text>
</comment>
<comment type="catalytic activity">
    <reaction evidence="1">
        <text>5-oxo-L-proline + ATP + 2 H2O = L-glutamate + ADP + phosphate + H(+)</text>
        <dbReference type="Rhea" id="RHEA:10348"/>
        <dbReference type="ChEBI" id="CHEBI:15377"/>
        <dbReference type="ChEBI" id="CHEBI:15378"/>
        <dbReference type="ChEBI" id="CHEBI:29985"/>
        <dbReference type="ChEBI" id="CHEBI:30616"/>
        <dbReference type="ChEBI" id="CHEBI:43474"/>
        <dbReference type="ChEBI" id="CHEBI:58402"/>
        <dbReference type="ChEBI" id="CHEBI:456216"/>
        <dbReference type="EC" id="3.5.2.9"/>
    </reaction>
</comment>
<comment type="subunit">
    <text evidence="1">Forms a complex composed of PxpA, PxpB and PxpC.</text>
</comment>
<comment type="similarity">
    <text evidence="1">Belongs to the LamB/PxpA family.</text>
</comment>
<evidence type="ECO:0000255" key="1">
    <source>
        <dbReference type="HAMAP-Rule" id="MF_00691"/>
    </source>
</evidence>
<name>PXPA_STAEQ</name>
<protein>
    <recommendedName>
        <fullName evidence="1">5-oxoprolinase subunit A</fullName>
        <shortName evidence="1">5-OPase subunit A</shortName>
        <ecNumber evidence="1">3.5.2.9</ecNumber>
    </recommendedName>
    <alternativeName>
        <fullName evidence="1">5-oxoprolinase (ATP-hydrolyzing) subunit A</fullName>
    </alternativeName>
</protein>
<gene>
    <name evidence="1" type="primary">pxpA</name>
    <name type="ordered locus">SERP1168</name>
</gene>
<reference key="1">
    <citation type="journal article" date="2005" name="J. Bacteriol.">
        <title>Insights on evolution of virulence and resistance from the complete genome analysis of an early methicillin-resistant Staphylococcus aureus strain and a biofilm-producing methicillin-resistant Staphylococcus epidermidis strain.</title>
        <authorList>
            <person name="Gill S.R."/>
            <person name="Fouts D.E."/>
            <person name="Archer G.L."/>
            <person name="Mongodin E.F."/>
            <person name="DeBoy R.T."/>
            <person name="Ravel J."/>
            <person name="Paulsen I.T."/>
            <person name="Kolonay J.F."/>
            <person name="Brinkac L.M."/>
            <person name="Beanan M.J."/>
            <person name="Dodson R.J."/>
            <person name="Daugherty S.C."/>
            <person name="Madupu R."/>
            <person name="Angiuoli S.V."/>
            <person name="Durkin A.S."/>
            <person name="Haft D.H."/>
            <person name="Vamathevan J.J."/>
            <person name="Khouri H."/>
            <person name="Utterback T.R."/>
            <person name="Lee C."/>
            <person name="Dimitrov G."/>
            <person name="Jiang L."/>
            <person name="Qin H."/>
            <person name="Weidman J."/>
            <person name="Tran K."/>
            <person name="Kang K.H."/>
            <person name="Hance I.R."/>
            <person name="Nelson K.E."/>
            <person name="Fraser C.M."/>
        </authorList>
    </citation>
    <scope>NUCLEOTIDE SEQUENCE [LARGE SCALE GENOMIC DNA]</scope>
    <source>
        <strain>ATCC 35984 / DSM 28319 / BCRC 17069 / CCUG 31568 / BM 3577 / RP62A</strain>
    </source>
</reference>